<gene>
    <name evidence="1" type="primary">aaeX</name>
    <name type="ordered locus">YPO3684</name>
    <name type="ordered locus">y0179</name>
    <name type="ordered locus">YP_3859</name>
</gene>
<reference key="1">
    <citation type="journal article" date="2001" name="Nature">
        <title>Genome sequence of Yersinia pestis, the causative agent of plague.</title>
        <authorList>
            <person name="Parkhill J."/>
            <person name="Wren B.W."/>
            <person name="Thomson N.R."/>
            <person name="Titball R.W."/>
            <person name="Holden M.T.G."/>
            <person name="Prentice M.B."/>
            <person name="Sebaihia M."/>
            <person name="James K.D."/>
            <person name="Churcher C.M."/>
            <person name="Mungall K.L."/>
            <person name="Baker S."/>
            <person name="Basham D."/>
            <person name="Bentley S.D."/>
            <person name="Brooks K."/>
            <person name="Cerdeno-Tarraga A.-M."/>
            <person name="Chillingworth T."/>
            <person name="Cronin A."/>
            <person name="Davies R.M."/>
            <person name="Davis P."/>
            <person name="Dougan G."/>
            <person name="Feltwell T."/>
            <person name="Hamlin N."/>
            <person name="Holroyd S."/>
            <person name="Jagels K."/>
            <person name="Karlyshev A.V."/>
            <person name="Leather S."/>
            <person name="Moule S."/>
            <person name="Oyston P.C.F."/>
            <person name="Quail M.A."/>
            <person name="Rutherford K.M."/>
            <person name="Simmonds M."/>
            <person name="Skelton J."/>
            <person name="Stevens K."/>
            <person name="Whitehead S."/>
            <person name="Barrell B.G."/>
        </authorList>
    </citation>
    <scope>NUCLEOTIDE SEQUENCE [LARGE SCALE GENOMIC DNA]</scope>
    <source>
        <strain>CO-92 / Biovar Orientalis</strain>
    </source>
</reference>
<reference key="2">
    <citation type="journal article" date="2002" name="J. Bacteriol.">
        <title>Genome sequence of Yersinia pestis KIM.</title>
        <authorList>
            <person name="Deng W."/>
            <person name="Burland V."/>
            <person name="Plunkett G. III"/>
            <person name="Boutin A."/>
            <person name="Mayhew G.F."/>
            <person name="Liss P."/>
            <person name="Perna N.T."/>
            <person name="Rose D.J."/>
            <person name="Mau B."/>
            <person name="Zhou S."/>
            <person name="Schwartz D.C."/>
            <person name="Fetherston J.D."/>
            <person name="Lindler L.E."/>
            <person name="Brubaker R.R."/>
            <person name="Plano G.V."/>
            <person name="Straley S.C."/>
            <person name="McDonough K.A."/>
            <person name="Nilles M.L."/>
            <person name="Matson J.S."/>
            <person name="Blattner F.R."/>
            <person name="Perry R.D."/>
        </authorList>
    </citation>
    <scope>NUCLEOTIDE SEQUENCE [LARGE SCALE GENOMIC DNA]</scope>
    <source>
        <strain>KIM10+ / Biovar Mediaevalis</strain>
    </source>
</reference>
<reference key="3">
    <citation type="journal article" date="2004" name="DNA Res.">
        <title>Complete genome sequence of Yersinia pestis strain 91001, an isolate avirulent to humans.</title>
        <authorList>
            <person name="Song Y."/>
            <person name="Tong Z."/>
            <person name="Wang J."/>
            <person name="Wang L."/>
            <person name="Guo Z."/>
            <person name="Han Y."/>
            <person name="Zhang J."/>
            <person name="Pei D."/>
            <person name="Zhou D."/>
            <person name="Qin H."/>
            <person name="Pang X."/>
            <person name="Han Y."/>
            <person name="Zhai J."/>
            <person name="Li M."/>
            <person name="Cui B."/>
            <person name="Qi Z."/>
            <person name="Jin L."/>
            <person name="Dai R."/>
            <person name="Chen F."/>
            <person name="Li S."/>
            <person name="Ye C."/>
            <person name="Du Z."/>
            <person name="Lin W."/>
            <person name="Wang J."/>
            <person name="Yu J."/>
            <person name="Yang H."/>
            <person name="Wang J."/>
            <person name="Huang P."/>
            <person name="Yang R."/>
        </authorList>
    </citation>
    <scope>NUCLEOTIDE SEQUENCE [LARGE SCALE GENOMIC DNA]</scope>
    <source>
        <strain>91001 / Biovar Mediaevalis</strain>
    </source>
</reference>
<protein>
    <recommendedName>
        <fullName evidence="1">Protein AaeX</fullName>
    </recommendedName>
</protein>
<organism>
    <name type="scientific">Yersinia pestis</name>
    <dbReference type="NCBI Taxonomy" id="632"/>
    <lineage>
        <taxon>Bacteria</taxon>
        <taxon>Pseudomonadati</taxon>
        <taxon>Pseudomonadota</taxon>
        <taxon>Gammaproteobacteria</taxon>
        <taxon>Enterobacterales</taxon>
        <taxon>Yersiniaceae</taxon>
        <taxon>Yersinia</taxon>
    </lineage>
</organism>
<name>AAEX_YERPE</name>
<evidence type="ECO:0000255" key="1">
    <source>
        <dbReference type="HAMAP-Rule" id="MF_01546"/>
    </source>
</evidence>
<accession>Q8ZAV0</accession>
<accession>Q0WAX0</accession>
<accession>Q74PN9</accession>
<accession>Q7CL74</accession>
<feature type="chain" id="PRO_0000215057" description="Protein AaeX">
    <location>
        <begin position="1"/>
        <end position="67"/>
    </location>
</feature>
<feature type="transmembrane region" description="Helical" evidence="1">
    <location>
        <begin position="3"/>
        <end position="23"/>
    </location>
</feature>
<feature type="transmembrane region" description="Helical" evidence="1">
    <location>
        <begin position="39"/>
        <end position="59"/>
    </location>
</feature>
<sequence>MSLLPVMVIFGLSFPPIFLELLISLALFFVVRRILQPTGIYEFVWHPALFNTALYCCLFYLTSRLFS</sequence>
<keyword id="KW-1003">Cell membrane</keyword>
<keyword id="KW-0472">Membrane</keyword>
<keyword id="KW-1185">Reference proteome</keyword>
<keyword id="KW-0812">Transmembrane</keyword>
<keyword id="KW-1133">Transmembrane helix</keyword>
<dbReference type="EMBL" id="AL590842">
    <property type="protein sequence ID" value="CAL22272.1"/>
    <property type="molecule type" value="Genomic_DNA"/>
</dbReference>
<dbReference type="EMBL" id="AE009952">
    <property type="protein sequence ID" value="AAM83773.1"/>
    <property type="molecule type" value="Genomic_DNA"/>
</dbReference>
<dbReference type="EMBL" id="AE017042">
    <property type="protein sequence ID" value="AAS64004.1"/>
    <property type="molecule type" value="Genomic_DNA"/>
</dbReference>
<dbReference type="PIR" id="AE0448">
    <property type="entry name" value="AE0448"/>
</dbReference>
<dbReference type="RefSeq" id="WP_002210093.1">
    <property type="nucleotide sequence ID" value="NZ_WUCM01000032.1"/>
</dbReference>
<dbReference type="RefSeq" id="YP_002348568.1">
    <property type="nucleotide sequence ID" value="NC_003143.1"/>
</dbReference>
<dbReference type="STRING" id="214092.YPO3684"/>
<dbReference type="PaxDb" id="214092-YPO3684"/>
<dbReference type="DNASU" id="1145126"/>
<dbReference type="EnsemblBacteria" id="AAS64004">
    <property type="protein sequence ID" value="AAS64004"/>
    <property type="gene ID" value="YP_3859"/>
</dbReference>
<dbReference type="GeneID" id="57975109"/>
<dbReference type="KEGG" id="ype:YPO3684"/>
<dbReference type="KEGG" id="ypk:y0179"/>
<dbReference type="KEGG" id="ypm:YP_3859"/>
<dbReference type="PATRIC" id="fig|214092.21.peg.4191"/>
<dbReference type="eggNOG" id="ENOG5032YJX">
    <property type="taxonomic scope" value="Bacteria"/>
</dbReference>
<dbReference type="HOGENOM" id="CLU_188292_0_0_6"/>
<dbReference type="OMA" id="IYDLVWH"/>
<dbReference type="OrthoDB" id="6080293at2"/>
<dbReference type="Proteomes" id="UP000000815">
    <property type="component" value="Chromosome"/>
</dbReference>
<dbReference type="Proteomes" id="UP000001019">
    <property type="component" value="Chromosome"/>
</dbReference>
<dbReference type="Proteomes" id="UP000002490">
    <property type="component" value="Chromosome"/>
</dbReference>
<dbReference type="GO" id="GO:0005886">
    <property type="term" value="C:plasma membrane"/>
    <property type="evidence" value="ECO:0007669"/>
    <property type="project" value="UniProtKB-SubCell"/>
</dbReference>
<dbReference type="HAMAP" id="MF_01546">
    <property type="entry name" value="AaeX"/>
    <property type="match status" value="1"/>
</dbReference>
<dbReference type="InterPro" id="IPR012451">
    <property type="entry name" value="DUF1656"/>
</dbReference>
<dbReference type="NCBIfam" id="NF008615">
    <property type="entry name" value="PRK11594.1"/>
    <property type="match status" value="1"/>
</dbReference>
<dbReference type="Pfam" id="PF07869">
    <property type="entry name" value="DUF1656"/>
    <property type="match status" value="1"/>
</dbReference>
<comment type="subcellular location">
    <subcellularLocation>
        <location evidence="1">Cell membrane</location>
        <topology evidence="1">Multi-pass membrane protein</topology>
    </subcellularLocation>
</comment>
<comment type="similarity">
    <text evidence="1">Belongs to the AaeX family.</text>
</comment>
<proteinExistence type="inferred from homology"/>